<feature type="chain" id="PRO_0000117209" description="tRNA uridine 5-carboxymethylaminomethyl modification enzyme MnmG">
    <location>
        <begin position="1"/>
        <end position="629"/>
    </location>
</feature>
<feature type="binding site" evidence="1">
    <location>
        <begin position="13"/>
        <end position="18"/>
    </location>
    <ligand>
        <name>FAD</name>
        <dbReference type="ChEBI" id="CHEBI:57692"/>
    </ligand>
</feature>
<feature type="binding site" evidence="1">
    <location>
        <position position="125"/>
    </location>
    <ligand>
        <name>FAD</name>
        <dbReference type="ChEBI" id="CHEBI:57692"/>
    </ligand>
</feature>
<feature type="binding site" evidence="1">
    <location>
        <position position="180"/>
    </location>
    <ligand>
        <name>FAD</name>
        <dbReference type="ChEBI" id="CHEBI:57692"/>
    </ligand>
</feature>
<feature type="binding site" evidence="1">
    <location>
        <begin position="273"/>
        <end position="287"/>
    </location>
    <ligand>
        <name>NAD(+)</name>
        <dbReference type="ChEBI" id="CHEBI:57540"/>
    </ligand>
</feature>
<feature type="binding site" evidence="1">
    <location>
        <position position="370"/>
    </location>
    <ligand>
        <name>FAD</name>
        <dbReference type="ChEBI" id="CHEBI:57692"/>
    </ligand>
</feature>
<name>MNMG_ALIF1</name>
<comment type="function">
    <text evidence="1">NAD-binding protein involved in the addition of a carboxymethylaminomethyl (cmnm) group at the wobble position (U34) of certain tRNAs, forming tRNA-cmnm(5)s(2)U34.</text>
</comment>
<comment type="cofactor">
    <cofactor evidence="1">
        <name>FAD</name>
        <dbReference type="ChEBI" id="CHEBI:57692"/>
    </cofactor>
</comment>
<comment type="subunit">
    <text evidence="1">Homodimer. Heterotetramer of two MnmE and two MnmG subunits.</text>
</comment>
<comment type="subcellular location">
    <subcellularLocation>
        <location evidence="1">Cytoplasm</location>
    </subcellularLocation>
</comment>
<comment type="similarity">
    <text evidence="1">Belongs to the MnmG family.</text>
</comment>
<accession>Q5E1M6</accession>
<gene>
    <name evidence="1" type="primary">mnmG</name>
    <name evidence="1" type="synonym">gidA</name>
    <name type="ordered locus">VF_2575</name>
</gene>
<proteinExistence type="inferred from homology"/>
<evidence type="ECO:0000255" key="1">
    <source>
        <dbReference type="HAMAP-Rule" id="MF_00129"/>
    </source>
</evidence>
<organism>
    <name type="scientific">Aliivibrio fischeri (strain ATCC 700601 / ES114)</name>
    <name type="common">Vibrio fischeri</name>
    <dbReference type="NCBI Taxonomy" id="312309"/>
    <lineage>
        <taxon>Bacteria</taxon>
        <taxon>Pseudomonadati</taxon>
        <taxon>Pseudomonadota</taxon>
        <taxon>Gammaproteobacteria</taxon>
        <taxon>Vibrionales</taxon>
        <taxon>Vibrionaceae</taxon>
        <taxon>Aliivibrio</taxon>
    </lineage>
</organism>
<sequence>MFYQDNFDVIVIGGGHAGTEAALAAARTGQNTLLLTHNIDTLGQMSCNPAIGGIGKGHLVKEVDALGGLMAQAIDHSGIQFRTLNASKGPAVRATRAQADRALYKAYVRSVLENQPNLTLFQQAVDDLIIENDKVMGAVTQMGLKFRAKSVVLTAGTFLGGQIHIGMENFSGGRAGDPSSITLAQRLRERPFRIDRLKTGTPPRIDARSVDFSGLEAQPGDNPTPVFSFLGKREHHPQQVNCFITHTNEKTHDVIRNNLDRSPMYAGVIEGIGPRYCPSIEDKVMRFADKDSHQIFIEPEGLSTHELYPNGISTSLPFDVQLQIVRSMKGFENAHIVRPGYAIEYDFFDPRDLKSTYETKFIEGLFFAGQINGTTGYEEAAAQGLMAGLNASLFAQGKEGWSPRRDEAYMGVLIDDLSTLGTKEPYRMFTSRAEYRLLLREDNADLRLTEQGRTLGLVDDVRWARFNEKVENMEQERQRLKDIWINPKSEQVDQVNAILKTPIAREASGEDLLRRPEVNYQSLVSIDGFGPALEDSQASEQVEIQVKYAGYIQRQRDEIEKSLRHENTKLPFDLDYKEVKGLSNEVVAKLSDAKPETIGIASRISGITPAAISILLVHLKKHGLLKKGE</sequence>
<protein>
    <recommendedName>
        <fullName evidence="1">tRNA uridine 5-carboxymethylaminomethyl modification enzyme MnmG</fullName>
    </recommendedName>
    <alternativeName>
        <fullName evidence="1">Glucose-inhibited division protein A</fullName>
    </alternativeName>
</protein>
<reference key="1">
    <citation type="journal article" date="2005" name="Proc. Natl. Acad. Sci. U.S.A.">
        <title>Complete genome sequence of Vibrio fischeri: a symbiotic bacterium with pathogenic congeners.</title>
        <authorList>
            <person name="Ruby E.G."/>
            <person name="Urbanowski M."/>
            <person name="Campbell J."/>
            <person name="Dunn A."/>
            <person name="Faini M."/>
            <person name="Gunsalus R."/>
            <person name="Lostroh P."/>
            <person name="Lupp C."/>
            <person name="McCann J."/>
            <person name="Millikan D."/>
            <person name="Schaefer A."/>
            <person name="Stabb E."/>
            <person name="Stevens A."/>
            <person name="Visick K."/>
            <person name="Whistler C."/>
            <person name="Greenberg E.P."/>
        </authorList>
    </citation>
    <scope>NUCLEOTIDE SEQUENCE [LARGE SCALE GENOMIC DNA]</scope>
    <source>
        <strain>ATCC 700601 / ES114</strain>
    </source>
</reference>
<keyword id="KW-0963">Cytoplasm</keyword>
<keyword id="KW-0274">FAD</keyword>
<keyword id="KW-0285">Flavoprotein</keyword>
<keyword id="KW-0520">NAD</keyword>
<keyword id="KW-1185">Reference proteome</keyword>
<keyword id="KW-0819">tRNA processing</keyword>
<dbReference type="EMBL" id="CP000020">
    <property type="protein sequence ID" value="AAW87070.1"/>
    <property type="molecule type" value="Genomic_DNA"/>
</dbReference>
<dbReference type="RefSeq" id="WP_011262905.1">
    <property type="nucleotide sequence ID" value="NZ_CAWLES010000001.1"/>
</dbReference>
<dbReference type="RefSeq" id="YP_205958.1">
    <property type="nucleotide sequence ID" value="NC_006840.2"/>
</dbReference>
<dbReference type="SMR" id="Q5E1M6"/>
<dbReference type="STRING" id="312309.VF_2575"/>
<dbReference type="EnsemblBacteria" id="AAW87070">
    <property type="protein sequence ID" value="AAW87070"/>
    <property type="gene ID" value="VF_2575"/>
</dbReference>
<dbReference type="GeneID" id="54165325"/>
<dbReference type="KEGG" id="vfi:VF_2575"/>
<dbReference type="PATRIC" id="fig|312309.11.peg.2602"/>
<dbReference type="eggNOG" id="COG0445">
    <property type="taxonomic scope" value="Bacteria"/>
</dbReference>
<dbReference type="HOGENOM" id="CLU_007831_2_2_6"/>
<dbReference type="OrthoDB" id="9815560at2"/>
<dbReference type="Proteomes" id="UP000000537">
    <property type="component" value="Chromosome I"/>
</dbReference>
<dbReference type="GO" id="GO:0005829">
    <property type="term" value="C:cytosol"/>
    <property type="evidence" value="ECO:0007669"/>
    <property type="project" value="TreeGrafter"/>
</dbReference>
<dbReference type="GO" id="GO:0050660">
    <property type="term" value="F:flavin adenine dinucleotide binding"/>
    <property type="evidence" value="ECO:0007669"/>
    <property type="project" value="UniProtKB-UniRule"/>
</dbReference>
<dbReference type="GO" id="GO:0030488">
    <property type="term" value="P:tRNA methylation"/>
    <property type="evidence" value="ECO:0007669"/>
    <property type="project" value="TreeGrafter"/>
</dbReference>
<dbReference type="GO" id="GO:0002098">
    <property type="term" value="P:tRNA wobble uridine modification"/>
    <property type="evidence" value="ECO:0007669"/>
    <property type="project" value="InterPro"/>
</dbReference>
<dbReference type="FunFam" id="1.10.10.1800:FF:000001">
    <property type="entry name" value="tRNA uridine 5-carboxymethylaminomethyl modification enzyme MnmG"/>
    <property type="match status" value="1"/>
</dbReference>
<dbReference type="FunFam" id="1.10.150.570:FF:000001">
    <property type="entry name" value="tRNA uridine 5-carboxymethylaminomethyl modification enzyme MnmG"/>
    <property type="match status" value="1"/>
</dbReference>
<dbReference type="FunFam" id="3.50.50.60:FF:000002">
    <property type="entry name" value="tRNA uridine 5-carboxymethylaminomethyl modification enzyme MnmG"/>
    <property type="match status" value="1"/>
</dbReference>
<dbReference type="FunFam" id="3.50.50.60:FF:000010">
    <property type="entry name" value="tRNA uridine 5-carboxymethylaminomethyl modification enzyme MnmG"/>
    <property type="match status" value="1"/>
</dbReference>
<dbReference type="Gene3D" id="3.50.50.60">
    <property type="entry name" value="FAD/NAD(P)-binding domain"/>
    <property type="match status" value="2"/>
</dbReference>
<dbReference type="Gene3D" id="1.10.150.570">
    <property type="entry name" value="GidA associated domain, C-terminal subdomain"/>
    <property type="match status" value="1"/>
</dbReference>
<dbReference type="Gene3D" id="1.10.10.1800">
    <property type="entry name" value="tRNA uridine 5-carboxymethylaminomethyl modification enzyme MnmG/GidA"/>
    <property type="match status" value="1"/>
</dbReference>
<dbReference type="HAMAP" id="MF_00129">
    <property type="entry name" value="MnmG_GidA"/>
    <property type="match status" value="1"/>
</dbReference>
<dbReference type="InterPro" id="IPR036188">
    <property type="entry name" value="FAD/NAD-bd_sf"/>
</dbReference>
<dbReference type="InterPro" id="IPR049312">
    <property type="entry name" value="GIDA_C_N"/>
</dbReference>
<dbReference type="InterPro" id="IPR004416">
    <property type="entry name" value="MnmG"/>
</dbReference>
<dbReference type="InterPro" id="IPR002218">
    <property type="entry name" value="MnmG-rel"/>
</dbReference>
<dbReference type="InterPro" id="IPR020595">
    <property type="entry name" value="MnmG-rel_CS"/>
</dbReference>
<dbReference type="InterPro" id="IPR026904">
    <property type="entry name" value="MnmG_C"/>
</dbReference>
<dbReference type="InterPro" id="IPR047001">
    <property type="entry name" value="MnmG_C_subdom"/>
</dbReference>
<dbReference type="InterPro" id="IPR044920">
    <property type="entry name" value="MnmG_C_subdom_sf"/>
</dbReference>
<dbReference type="InterPro" id="IPR040131">
    <property type="entry name" value="MnmG_N"/>
</dbReference>
<dbReference type="NCBIfam" id="TIGR00136">
    <property type="entry name" value="mnmG_gidA"/>
    <property type="match status" value="1"/>
</dbReference>
<dbReference type="PANTHER" id="PTHR11806">
    <property type="entry name" value="GLUCOSE INHIBITED DIVISION PROTEIN A"/>
    <property type="match status" value="1"/>
</dbReference>
<dbReference type="PANTHER" id="PTHR11806:SF0">
    <property type="entry name" value="PROTEIN MTO1 HOMOLOG, MITOCHONDRIAL"/>
    <property type="match status" value="1"/>
</dbReference>
<dbReference type="Pfam" id="PF01134">
    <property type="entry name" value="GIDA"/>
    <property type="match status" value="1"/>
</dbReference>
<dbReference type="Pfam" id="PF21680">
    <property type="entry name" value="GIDA_C_1st"/>
    <property type="match status" value="1"/>
</dbReference>
<dbReference type="Pfam" id="PF13932">
    <property type="entry name" value="SAM_GIDA_C"/>
    <property type="match status" value="1"/>
</dbReference>
<dbReference type="SMART" id="SM01228">
    <property type="entry name" value="GIDA_assoc_3"/>
    <property type="match status" value="1"/>
</dbReference>
<dbReference type="SUPFAM" id="SSF51905">
    <property type="entry name" value="FAD/NAD(P)-binding domain"/>
    <property type="match status" value="1"/>
</dbReference>
<dbReference type="PROSITE" id="PS01280">
    <property type="entry name" value="GIDA_1"/>
    <property type="match status" value="1"/>
</dbReference>
<dbReference type="PROSITE" id="PS01281">
    <property type="entry name" value="GIDA_2"/>
    <property type="match status" value="1"/>
</dbReference>